<protein>
    <recommendedName>
        <fullName>Putative Na(+)/H(+) antiporter NhaA homolog</fullName>
    </recommendedName>
</protein>
<feature type="chain" id="PRO_0000334396" description="Putative Na(+)/H(+) antiporter NhaA homolog">
    <location>
        <begin position="1"/>
        <end position="168"/>
    </location>
</feature>
<feature type="transmembrane region" description="Helical" evidence="2">
    <location>
        <begin position="1"/>
        <end position="21"/>
    </location>
</feature>
<feature type="transmembrane region" description="Helical" evidence="2">
    <location>
        <begin position="37"/>
        <end position="57"/>
    </location>
</feature>
<feature type="transmembrane region" description="Helical" evidence="2">
    <location>
        <begin position="70"/>
        <end position="90"/>
    </location>
</feature>
<feature type="transmembrane region" description="Helical" evidence="2">
    <location>
        <begin position="111"/>
        <end position="131"/>
    </location>
</feature>
<feature type="transmembrane region" description="Helical" evidence="2">
    <location>
        <begin position="144"/>
        <end position="164"/>
    </location>
</feature>
<proteinExistence type="uncertain"/>
<evidence type="ECO:0000250" key="1"/>
<evidence type="ECO:0000255" key="2"/>
<evidence type="ECO:0000305" key="3"/>
<gene>
    <name type="primary">nhaA</name>
    <name type="ordered locus">A1I_07885</name>
</gene>
<accession>A8GYC5</accession>
<reference key="1">
    <citation type="submission" date="2007-09" db="EMBL/GenBank/DDBJ databases">
        <title>Complete genome sequencing of Rickettsia bellii.</title>
        <authorList>
            <person name="Madan A."/>
            <person name="Lee H."/>
            <person name="Madan A."/>
            <person name="Yoon J.-G."/>
            <person name="Ryu G.-Y."/>
            <person name="Dasch G."/>
            <person name="Ereemeva M."/>
        </authorList>
    </citation>
    <scope>NUCLEOTIDE SEQUENCE [LARGE SCALE GENOMIC DNA]</scope>
    <source>
        <strain>OSU 85-389</strain>
    </source>
</reference>
<organism>
    <name type="scientific">Rickettsia bellii (strain OSU 85-389)</name>
    <dbReference type="NCBI Taxonomy" id="391896"/>
    <lineage>
        <taxon>Bacteria</taxon>
        <taxon>Pseudomonadati</taxon>
        <taxon>Pseudomonadota</taxon>
        <taxon>Alphaproteobacteria</taxon>
        <taxon>Rickettsiales</taxon>
        <taxon>Rickettsiaceae</taxon>
        <taxon>Rickettsieae</taxon>
        <taxon>Rickettsia</taxon>
        <taxon>belli group</taxon>
    </lineage>
</organism>
<dbReference type="EMBL" id="CP000849">
    <property type="protein sequence ID" value="ABV79875.1"/>
    <property type="molecule type" value="Genomic_DNA"/>
</dbReference>
<dbReference type="SMR" id="A8GYC5"/>
<dbReference type="KEGG" id="rbo:A1I_07885"/>
<dbReference type="HOGENOM" id="CLU_080452_0_1_5"/>
<dbReference type="GO" id="GO:0005886">
    <property type="term" value="C:plasma membrane"/>
    <property type="evidence" value="ECO:0007669"/>
    <property type="project" value="UniProtKB-SubCell"/>
</dbReference>
<dbReference type="GO" id="GO:0015385">
    <property type="term" value="F:sodium:proton antiporter activity"/>
    <property type="evidence" value="ECO:0007669"/>
    <property type="project" value="TreeGrafter"/>
</dbReference>
<dbReference type="GO" id="GO:0006885">
    <property type="term" value="P:regulation of pH"/>
    <property type="evidence" value="ECO:0007669"/>
    <property type="project" value="InterPro"/>
</dbReference>
<dbReference type="Gene3D" id="1.20.1530.10">
    <property type="entry name" value="Na+/H+ antiporter like domain"/>
    <property type="match status" value="1"/>
</dbReference>
<dbReference type="InterPro" id="IPR023171">
    <property type="entry name" value="Na/H_antiporter_dom_sf"/>
</dbReference>
<dbReference type="InterPro" id="IPR004670">
    <property type="entry name" value="NhaA"/>
</dbReference>
<dbReference type="PANTHER" id="PTHR30341:SF0">
    <property type="entry name" value="NA(+)_H(+) ANTIPORTER NHAA"/>
    <property type="match status" value="1"/>
</dbReference>
<dbReference type="PANTHER" id="PTHR30341">
    <property type="entry name" value="SODIUM ION/PROTON ANTIPORTER NHAA-RELATED"/>
    <property type="match status" value="1"/>
</dbReference>
<dbReference type="Pfam" id="PF06965">
    <property type="entry name" value="Na_H_antiport_1"/>
    <property type="match status" value="1"/>
</dbReference>
<keyword id="KW-0997">Cell inner membrane</keyword>
<keyword id="KW-1003">Cell membrane</keyword>
<keyword id="KW-0472">Membrane</keyword>
<keyword id="KW-0812">Transmembrane</keyword>
<keyword id="KW-1133">Transmembrane helix</keyword>
<sequence length="168" mass="18303">MVEAGIHGTLCGAIIALFIPVNIKGQINSSFHKLEKLIQPFVNYFILPLFVFMNSGVLLKDFSFRSVCSSLTFGIILGLFIGKQLGVMLFSYPCVKFNFCSLPSNTSWLKFYSIAILGGIGFTLSLFIGGITFEGGCPSNSMRVAVIIGSLLSALFGILVMRYCTKSK</sequence>
<name>NHAA_RICB8</name>
<comment type="subcellular location">
    <subcellularLocation>
        <location evidence="1">Cell inner membrane</location>
        <topology evidence="1">Multi-pass membrane protein</topology>
    </subcellularLocation>
</comment>
<comment type="similarity">
    <text evidence="3">Belongs to the NhaA Na(+)/H(+) (TC 2.A.33) antiporter family.</text>
</comment>
<comment type="caution">
    <text evidence="3">Could be the product of a pseudogene. This sequence is shorter than orthologs.</text>
</comment>